<protein>
    <recommendedName>
        <fullName evidence="1">Proline--tRNA ligase</fullName>
        <ecNumber evidence="1">6.1.1.15</ecNumber>
    </recommendedName>
    <alternativeName>
        <fullName evidence="1">Prolyl-tRNA synthetase</fullName>
        <shortName evidence="1">ProRS</shortName>
    </alternativeName>
</protein>
<keyword id="KW-0030">Aminoacyl-tRNA synthetase</keyword>
<keyword id="KW-0067">ATP-binding</keyword>
<keyword id="KW-0963">Cytoplasm</keyword>
<keyword id="KW-0436">Ligase</keyword>
<keyword id="KW-0547">Nucleotide-binding</keyword>
<keyword id="KW-0648">Protein biosynthesis</keyword>
<keyword id="KW-1185">Reference proteome</keyword>
<gene>
    <name evidence="1" type="primary">proS</name>
    <name type="ordered locus">plu0692</name>
</gene>
<organism>
    <name type="scientific">Photorhabdus laumondii subsp. laumondii (strain DSM 15139 / CIP 105565 / TT01)</name>
    <name type="common">Photorhabdus luminescens subsp. laumondii</name>
    <dbReference type="NCBI Taxonomy" id="243265"/>
    <lineage>
        <taxon>Bacteria</taxon>
        <taxon>Pseudomonadati</taxon>
        <taxon>Pseudomonadota</taxon>
        <taxon>Gammaproteobacteria</taxon>
        <taxon>Enterobacterales</taxon>
        <taxon>Morganellaceae</taxon>
        <taxon>Photorhabdus</taxon>
    </lineage>
</organism>
<reference key="1">
    <citation type="journal article" date="2003" name="Nat. Biotechnol.">
        <title>The genome sequence of the entomopathogenic bacterium Photorhabdus luminescens.</title>
        <authorList>
            <person name="Duchaud E."/>
            <person name="Rusniok C."/>
            <person name="Frangeul L."/>
            <person name="Buchrieser C."/>
            <person name="Givaudan A."/>
            <person name="Taourit S."/>
            <person name="Bocs S."/>
            <person name="Boursaux-Eude C."/>
            <person name="Chandler M."/>
            <person name="Charles J.-F."/>
            <person name="Dassa E."/>
            <person name="Derose R."/>
            <person name="Derzelle S."/>
            <person name="Freyssinet G."/>
            <person name="Gaudriault S."/>
            <person name="Medigue C."/>
            <person name="Lanois A."/>
            <person name="Powell K."/>
            <person name="Siguier P."/>
            <person name="Vincent R."/>
            <person name="Wingate V."/>
            <person name="Zouine M."/>
            <person name="Glaser P."/>
            <person name="Boemare N."/>
            <person name="Danchin A."/>
            <person name="Kunst F."/>
        </authorList>
    </citation>
    <scope>NUCLEOTIDE SEQUENCE [LARGE SCALE GENOMIC DNA]</scope>
    <source>
        <strain>DSM 15139 / CIP 105565 / TT01</strain>
    </source>
</reference>
<accession>Q7N8M7</accession>
<feature type="chain" id="PRO_0000248736" description="Proline--tRNA ligase">
    <location>
        <begin position="1"/>
        <end position="572"/>
    </location>
</feature>
<sequence length="572" mass="63699">MRTSQYLLSTLKETPADAEVVSHKLMLRAGMIRKLASGLYNWMPTGIRVLKKVEKIVREEMNNTGAIEISMPVVQPADLWQESGRWEQYGPELLRFVDRGDRPFVLGPTHEEVITDLIRNEVSSYKQLPLTLFQIQTKFRDEVRPRFGVMRSREFLMKDAYSFHATQTSLQETYDNMYEAYSKIFTRIGLDFRAVLADTGSIGGSASHEFQVLAASGEDDIVFSTESNYAANIELAEAVAPAHDRAVPTEDMHLVDTPNAKTIAELVEQFNLPIEKTVKTLMVHAAEGTSHKLIALLVRGDHELNEIKAEKLSLVASPLTFATEEEIRSIVGAGPGSLGPVNLPIPAIIDRSVAVMSDFGAGANINDKHYFGINWERDLPVPEVADIRNVVEGDASPDGKGTLLIKRGIEVGHIFQLGTKYSDAMKATVQGEDGHNQIVTMGCYGIGVTRIVAAAIEQNHDDRGIIWPDAIAPFQVAILPMNMHKSYRVKEVAEKLYADLRASGIDVIFDDRKERPGVMFADMELIGVPHTVVIGDRNLDNGEVEYKHRRNDEKQMLKLDNVVDYLKQQLGC</sequence>
<dbReference type="EC" id="6.1.1.15" evidence="1"/>
<dbReference type="EMBL" id="BX571861">
    <property type="protein sequence ID" value="CAE12987.1"/>
    <property type="molecule type" value="Genomic_DNA"/>
</dbReference>
<dbReference type="RefSeq" id="WP_011145068.1">
    <property type="nucleotide sequence ID" value="NC_005126.1"/>
</dbReference>
<dbReference type="SMR" id="Q7N8M7"/>
<dbReference type="STRING" id="243265.plu0692"/>
<dbReference type="GeneID" id="48846981"/>
<dbReference type="KEGG" id="plu:plu0692"/>
<dbReference type="eggNOG" id="COG0442">
    <property type="taxonomic scope" value="Bacteria"/>
</dbReference>
<dbReference type="HOGENOM" id="CLU_016739_0_0_6"/>
<dbReference type="OrthoDB" id="9809052at2"/>
<dbReference type="Proteomes" id="UP000002514">
    <property type="component" value="Chromosome"/>
</dbReference>
<dbReference type="GO" id="GO:0005829">
    <property type="term" value="C:cytosol"/>
    <property type="evidence" value="ECO:0007669"/>
    <property type="project" value="TreeGrafter"/>
</dbReference>
<dbReference type="GO" id="GO:0002161">
    <property type="term" value="F:aminoacyl-tRNA deacylase activity"/>
    <property type="evidence" value="ECO:0007669"/>
    <property type="project" value="InterPro"/>
</dbReference>
<dbReference type="GO" id="GO:0005524">
    <property type="term" value="F:ATP binding"/>
    <property type="evidence" value="ECO:0007669"/>
    <property type="project" value="UniProtKB-UniRule"/>
</dbReference>
<dbReference type="GO" id="GO:0004827">
    <property type="term" value="F:proline-tRNA ligase activity"/>
    <property type="evidence" value="ECO:0007669"/>
    <property type="project" value="UniProtKB-UniRule"/>
</dbReference>
<dbReference type="GO" id="GO:0006433">
    <property type="term" value="P:prolyl-tRNA aminoacylation"/>
    <property type="evidence" value="ECO:0007669"/>
    <property type="project" value="UniProtKB-UniRule"/>
</dbReference>
<dbReference type="CDD" id="cd04334">
    <property type="entry name" value="ProRS-INS"/>
    <property type="match status" value="1"/>
</dbReference>
<dbReference type="CDD" id="cd00861">
    <property type="entry name" value="ProRS_anticodon_short"/>
    <property type="match status" value="1"/>
</dbReference>
<dbReference type="CDD" id="cd00779">
    <property type="entry name" value="ProRS_core_prok"/>
    <property type="match status" value="1"/>
</dbReference>
<dbReference type="FunFam" id="3.30.930.10:FF:000043">
    <property type="entry name" value="Proline--tRNA ligase"/>
    <property type="match status" value="1"/>
</dbReference>
<dbReference type="FunFam" id="3.30.930.10:FF:000097">
    <property type="entry name" value="Proline--tRNA ligase"/>
    <property type="match status" value="1"/>
</dbReference>
<dbReference type="FunFam" id="3.40.50.800:FF:000006">
    <property type="entry name" value="Proline--tRNA ligase"/>
    <property type="match status" value="1"/>
</dbReference>
<dbReference type="FunFam" id="3.90.960.10:FF:000001">
    <property type="entry name" value="Proline--tRNA ligase"/>
    <property type="match status" value="1"/>
</dbReference>
<dbReference type="Gene3D" id="3.40.50.800">
    <property type="entry name" value="Anticodon-binding domain"/>
    <property type="match status" value="1"/>
</dbReference>
<dbReference type="Gene3D" id="3.30.930.10">
    <property type="entry name" value="Bira Bifunctional Protein, Domain 2"/>
    <property type="match status" value="2"/>
</dbReference>
<dbReference type="Gene3D" id="3.90.960.10">
    <property type="entry name" value="YbaK/aminoacyl-tRNA synthetase-associated domain"/>
    <property type="match status" value="1"/>
</dbReference>
<dbReference type="HAMAP" id="MF_01569">
    <property type="entry name" value="Pro_tRNA_synth_type1"/>
    <property type="match status" value="1"/>
</dbReference>
<dbReference type="InterPro" id="IPR002314">
    <property type="entry name" value="aa-tRNA-synt_IIb"/>
</dbReference>
<dbReference type="InterPro" id="IPR006195">
    <property type="entry name" value="aa-tRNA-synth_II"/>
</dbReference>
<dbReference type="InterPro" id="IPR045864">
    <property type="entry name" value="aa-tRNA-synth_II/BPL/LPL"/>
</dbReference>
<dbReference type="InterPro" id="IPR004154">
    <property type="entry name" value="Anticodon-bd"/>
</dbReference>
<dbReference type="InterPro" id="IPR036621">
    <property type="entry name" value="Anticodon-bd_dom_sf"/>
</dbReference>
<dbReference type="InterPro" id="IPR002316">
    <property type="entry name" value="Pro-tRNA-ligase_IIa"/>
</dbReference>
<dbReference type="InterPro" id="IPR004500">
    <property type="entry name" value="Pro-tRNA-synth_IIa_bac-type"/>
</dbReference>
<dbReference type="InterPro" id="IPR023717">
    <property type="entry name" value="Pro-tRNA-Synthase_IIa_type1"/>
</dbReference>
<dbReference type="InterPro" id="IPR050062">
    <property type="entry name" value="Pro-tRNA_synthetase"/>
</dbReference>
<dbReference type="InterPro" id="IPR044140">
    <property type="entry name" value="ProRS_anticodon_short"/>
</dbReference>
<dbReference type="InterPro" id="IPR033730">
    <property type="entry name" value="ProRS_core_prok"/>
</dbReference>
<dbReference type="InterPro" id="IPR036754">
    <property type="entry name" value="YbaK/aa-tRNA-synt-asso_dom_sf"/>
</dbReference>
<dbReference type="InterPro" id="IPR007214">
    <property type="entry name" value="YbaK/aa-tRNA-synth-assoc-dom"/>
</dbReference>
<dbReference type="NCBIfam" id="NF006625">
    <property type="entry name" value="PRK09194.1"/>
    <property type="match status" value="1"/>
</dbReference>
<dbReference type="NCBIfam" id="TIGR00409">
    <property type="entry name" value="proS_fam_II"/>
    <property type="match status" value="1"/>
</dbReference>
<dbReference type="PANTHER" id="PTHR42753">
    <property type="entry name" value="MITOCHONDRIAL RIBOSOME PROTEIN L39/PROLYL-TRNA LIGASE FAMILY MEMBER"/>
    <property type="match status" value="1"/>
</dbReference>
<dbReference type="PANTHER" id="PTHR42753:SF2">
    <property type="entry name" value="PROLINE--TRNA LIGASE"/>
    <property type="match status" value="1"/>
</dbReference>
<dbReference type="Pfam" id="PF03129">
    <property type="entry name" value="HGTP_anticodon"/>
    <property type="match status" value="1"/>
</dbReference>
<dbReference type="Pfam" id="PF00587">
    <property type="entry name" value="tRNA-synt_2b"/>
    <property type="match status" value="1"/>
</dbReference>
<dbReference type="Pfam" id="PF04073">
    <property type="entry name" value="tRNA_edit"/>
    <property type="match status" value="1"/>
</dbReference>
<dbReference type="PIRSF" id="PIRSF001535">
    <property type="entry name" value="ProRS_1"/>
    <property type="match status" value="1"/>
</dbReference>
<dbReference type="PRINTS" id="PR01046">
    <property type="entry name" value="TRNASYNTHPRO"/>
</dbReference>
<dbReference type="SUPFAM" id="SSF52954">
    <property type="entry name" value="Class II aaRS ABD-related"/>
    <property type="match status" value="1"/>
</dbReference>
<dbReference type="SUPFAM" id="SSF55681">
    <property type="entry name" value="Class II aaRS and biotin synthetases"/>
    <property type="match status" value="1"/>
</dbReference>
<dbReference type="SUPFAM" id="SSF55826">
    <property type="entry name" value="YbaK/ProRS associated domain"/>
    <property type="match status" value="1"/>
</dbReference>
<dbReference type="PROSITE" id="PS50862">
    <property type="entry name" value="AA_TRNA_LIGASE_II"/>
    <property type="match status" value="1"/>
</dbReference>
<comment type="function">
    <text evidence="1">Catalyzes the attachment of proline to tRNA(Pro) in a two-step reaction: proline is first activated by ATP to form Pro-AMP and then transferred to the acceptor end of tRNA(Pro). As ProRS can inadvertently accommodate and process non-cognate amino acids such as alanine and cysteine, to avoid such errors it has two additional distinct editing activities against alanine. One activity is designated as 'pretransfer' editing and involves the tRNA(Pro)-independent hydrolysis of activated Ala-AMP. The other activity is designated 'posttransfer' editing and involves deacylation of mischarged Ala-tRNA(Pro). The misacylated Cys-tRNA(Pro) is not edited by ProRS.</text>
</comment>
<comment type="catalytic activity">
    <reaction evidence="1">
        <text>tRNA(Pro) + L-proline + ATP = L-prolyl-tRNA(Pro) + AMP + diphosphate</text>
        <dbReference type="Rhea" id="RHEA:14305"/>
        <dbReference type="Rhea" id="RHEA-COMP:9700"/>
        <dbReference type="Rhea" id="RHEA-COMP:9702"/>
        <dbReference type="ChEBI" id="CHEBI:30616"/>
        <dbReference type="ChEBI" id="CHEBI:33019"/>
        <dbReference type="ChEBI" id="CHEBI:60039"/>
        <dbReference type="ChEBI" id="CHEBI:78442"/>
        <dbReference type="ChEBI" id="CHEBI:78532"/>
        <dbReference type="ChEBI" id="CHEBI:456215"/>
        <dbReference type="EC" id="6.1.1.15"/>
    </reaction>
</comment>
<comment type="subunit">
    <text evidence="1">Homodimer.</text>
</comment>
<comment type="subcellular location">
    <subcellularLocation>
        <location evidence="1">Cytoplasm</location>
    </subcellularLocation>
</comment>
<comment type="domain">
    <text evidence="1">Consists of three domains: the N-terminal catalytic domain, the editing domain and the C-terminal anticodon-binding domain.</text>
</comment>
<comment type="similarity">
    <text evidence="1">Belongs to the class-II aminoacyl-tRNA synthetase family. ProS type 1 subfamily.</text>
</comment>
<evidence type="ECO:0000255" key="1">
    <source>
        <dbReference type="HAMAP-Rule" id="MF_01569"/>
    </source>
</evidence>
<name>SYP_PHOLL</name>
<proteinExistence type="inferred from homology"/>